<dbReference type="EC" id="1.2.1.59"/>
<dbReference type="EMBL" id="X66409">
    <property type="protein sequence ID" value="CAA47040.1"/>
    <property type="molecule type" value="Genomic_DNA"/>
</dbReference>
<dbReference type="EMBL" id="X80178">
    <property type="protein sequence ID" value="CAA56460.1"/>
    <property type="molecule type" value="Genomic_DNA"/>
</dbReference>
<dbReference type="EMBL" id="Y18930">
    <property type="protein sequence ID" value="CAB57771.1"/>
    <property type="molecule type" value="Genomic_DNA"/>
</dbReference>
<dbReference type="EMBL" id="AE006641">
    <property type="protein sequence ID" value="AAK40848.1"/>
    <property type="molecule type" value="Genomic_DNA"/>
</dbReference>
<dbReference type="PIR" id="S51230">
    <property type="entry name" value="S51230"/>
</dbReference>
<dbReference type="PIR" id="S63529">
    <property type="entry name" value="S63529"/>
</dbReference>
<dbReference type="RefSeq" id="WP_009991048.1">
    <property type="nucleotide sequence ID" value="NC_002754.1"/>
</dbReference>
<dbReference type="PDB" id="1B7G">
    <property type="method" value="X-ray"/>
    <property type="resolution" value="2.05 A"/>
    <property type="chains" value="O/Q=1-340"/>
</dbReference>
<dbReference type="PDBsum" id="1B7G"/>
<dbReference type="SMR" id="P39460"/>
<dbReference type="FunCoup" id="P39460">
    <property type="interactions" value="193"/>
</dbReference>
<dbReference type="STRING" id="273057.SSO0528"/>
<dbReference type="PaxDb" id="273057-SSO0528"/>
<dbReference type="EnsemblBacteria" id="AAK40848">
    <property type="protein sequence ID" value="AAK40848"/>
    <property type="gene ID" value="SSO0528"/>
</dbReference>
<dbReference type="KEGG" id="sso:SSO0528"/>
<dbReference type="PATRIC" id="fig|273057.12.peg.527"/>
<dbReference type="eggNOG" id="arCOG00493">
    <property type="taxonomic scope" value="Archaea"/>
</dbReference>
<dbReference type="HOGENOM" id="CLU_069533_0_0_2"/>
<dbReference type="InParanoid" id="P39460"/>
<dbReference type="PhylomeDB" id="P39460"/>
<dbReference type="BRENDA" id="1.2.1.12">
    <property type="organism ID" value="6163"/>
</dbReference>
<dbReference type="BRENDA" id="1.2.1.13">
    <property type="organism ID" value="6163"/>
</dbReference>
<dbReference type="SABIO-RK" id="P39460"/>
<dbReference type="UniPathway" id="UPA00109">
    <property type="reaction ID" value="UER00184"/>
</dbReference>
<dbReference type="EvolutionaryTrace" id="P39460"/>
<dbReference type="Proteomes" id="UP000001974">
    <property type="component" value="Chromosome"/>
</dbReference>
<dbReference type="GO" id="GO:0005737">
    <property type="term" value="C:cytoplasm"/>
    <property type="evidence" value="ECO:0007669"/>
    <property type="project" value="UniProtKB-SubCell"/>
</dbReference>
<dbReference type="GO" id="GO:0008839">
    <property type="term" value="F:4-hydroxy-tetrahydrodipicolinate reductase"/>
    <property type="evidence" value="ECO:0007669"/>
    <property type="project" value="InterPro"/>
</dbReference>
<dbReference type="GO" id="GO:0004365">
    <property type="term" value="F:glyceraldehyde-3-phosphate dehydrogenase (NAD+) (phosphorylating) activity"/>
    <property type="evidence" value="ECO:0007669"/>
    <property type="project" value="UniProtKB-UniRule"/>
</dbReference>
<dbReference type="GO" id="GO:0047100">
    <property type="term" value="F:glyceraldehyde-3-phosphate dehydrogenase (NADP+) (phosphorylating) activity"/>
    <property type="evidence" value="ECO:0007669"/>
    <property type="project" value="RHEA"/>
</dbReference>
<dbReference type="GO" id="GO:0051287">
    <property type="term" value="F:NAD binding"/>
    <property type="evidence" value="ECO:0007669"/>
    <property type="project" value="InterPro"/>
</dbReference>
<dbReference type="GO" id="GO:0050661">
    <property type="term" value="F:NADP binding"/>
    <property type="evidence" value="ECO:0007669"/>
    <property type="project" value="InterPro"/>
</dbReference>
<dbReference type="GO" id="GO:0006096">
    <property type="term" value="P:glycolytic process"/>
    <property type="evidence" value="ECO:0007669"/>
    <property type="project" value="UniProtKB-UniRule"/>
</dbReference>
<dbReference type="GO" id="GO:0009089">
    <property type="term" value="P:lysine biosynthetic process via diaminopimelate"/>
    <property type="evidence" value="ECO:0007669"/>
    <property type="project" value="InterPro"/>
</dbReference>
<dbReference type="CDD" id="cd18127">
    <property type="entry name" value="GAPDH_II_C"/>
    <property type="match status" value="1"/>
</dbReference>
<dbReference type="CDD" id="cd02278">
    <property type="entry name" value="GAPDH_II_N"/>
    <property type="match status" value="1"/>
</dbReference>
<dbReference type="Gene3D" id="3.30.360.10">
    <property type="entry name" value="Dihydrodipicolinate Reductase, domain 2"/>
    <property type="match status" value="1"/>
</dbReference>
<dbReference type="Gene3D" id="3.40.50.720">
    <property type="entry name" value="NAD(P)-binding Rossmann-like Domain"/>
    <property type="match status" value="1"/>
</dbReference>
<dbReference type="HAMAP" id="MF_00559">
    <property type="entry name" value="G3P_dehdrog_arch"/>
    <property type="match status" value="1"/>
</dbReference>
<dbReference type="InterPro" id="IPR000846">
    <property type="entry name" value="DapB_N"/>
</dbReference>
<dbReference type="InterPro" id="IPR020831">
    <property type="entry name" value="GlycerAld/Erythrose_P_DH"/>
</dbReference>
<dbReference type="InterPro" id="IPR020830">
    <property type="entry name" value="GlycerAld_3-P_DH_AS"/>
</dbReference>
<dbReference type="InterPro" id="IPR020829">
    <property type="entry name" value="GlycerAld_3-P_DH_cat"/>
</dbReference>
<dbReference type="InterPro" id="IPR020828">
    <property type="entry name" value="GlycerAld_3-P_DH_NAD(P)-bd"/>
</dbReference>
<dbReference type="InterPro" id="IPR006436">
    <property type="entry name" value="Glyceraldehyde-3-P_DH_2_arc"/>
</dbReference>
<dbReference type="InterPro" id="IPR036291">
    <property type="entry name" value="NAD(P)-bd_dom_sf"/>
</dbReference>
<dbReference type="NCBIfam" id="TIGR01546">
    <property type="entry name" value="GAPDH-II_archae"/>
    <property type="match status" value="1"/>
</dbReference>
<dbReference type="NCBIfam" id="NF003251">
    <property type="entry name" value="PRK04207.1"/>
    <property type="match status" value="1"/>
</dbReference>
<dbReference type="Pfam" id="PF01113">
    <property type="entry name" value="DapB_N"/>
    <property type="match status" value="1"/>
</dbReference>
<dbReference type="Pfam" id="PF02800">
    <property type="entry name" value="Gp_dh_C"/>
    <property type="match status" value="1"/>
</dbReference>
<dbReference type="PIRSF" id="PIRSF000149">
    <property type="entry name" value="GAP_DH"/>
    <property type="match status" value="1"/>
</dbReference>
<dbReference type="SMART" id="SM00846">
    <property type="entry name" value="Gp_dh_N"/>
    <property type="match status" value="1"/>
</dbReference>
<dbReference type="SUPFAM" id="SSF55347">
    <property type="entry name" value="Glyceraldehyde-3-phosphate dehydrogenase-like, C-terminal domain"/>
    <property type="match status" value="1"/>
</dbReference>
<dbReference type="SUPFAM" id="SSF51735">
    <property type="entry name" value="NAD(P)-binding Rossmann-fold domains"/>
    <property type="match status" value="1"/>
</dbReference>
<dbReference type="PROSITE" id="PS00071">
    <property type="entry name" value="GAPDH"/>
    <property type="match status" value="1"/>
</dbReference>
<evidence type="ECO:0000250" key="1"/>
<evidence type="ECO:0000305" key="2"/>
<evidence type="ECO:0007829" key="3">
    <source>
        <dbReference type="PDB" id="1B7G"/>
    </source>
</evidence>
<organism>
    <name type="scientific">Saccharolobus solfataricus (strain ATCC 35092 / DSM 1617 / JCM 11322 / P2)</name>
    <name type="common">Sulfolobus solfataricus</name>
    <dbReference type="NCBI Taxonomy" id="273057"/>
    <lineage>
        <taxon>Archaea</taxon>
        <taxon>Thermoproteota</taxon>
        <taxon>Thermoprotei</taxon>
        <taxon>Sulfolobales</taxon>
        <taxon>Sulfolobaceae</taxon>
        <taxon>Saccharolobus</taxon>
    </lineage>
</organism>
<reference key="1">
    <citation type="journal article" date="1993" name="Biochem. Genet.">
        <title>Nucleotide sequence and molecular evolution of the gene coding for glyceraldehyde-3-phosphate dehydrogenase in the thermoacidophilic archaebacterium Sulfolobus solfataricus.</title>
        <authorList>
            <person name="Arcari P."/>
            <person name="Russo A.D."/>
            <person name="Ianniciello G."/>
            <person name="Gallo M."/>
            <person name="Bocchini V."/>
        </authorList>
    </citation>
    <scope>NUCLEOTIDE SEQUENCE [GENOMIC DNA]</scope>
    <scope>PARTIAL PROTEIN SEQUENCE</scope>
    <source>
        <strain>DSM 5833 / MT-4</strain>
    </source>
</reference>
<reference key="2">
    <citation type="journal article" date="1995" name="Eur. J. Biochem.">
        <title>The phosphoglycerate kinase and glyceraldehyde-3-phosphate dehydrogenase genes from the thermophilic archaeon Sulfolobus solfataricus overlap by 8-bp. Isolation, sequencing of the genes and expression in Escherichia coli.</title>
        <authorList>
            <person name="Jones C.E."/>
            <person name="Fleming T.M."/>
            <person name="Cowan D.A."/>
            <person name="Littlechild J.A."/>
            <person name="Piper P.W."/>
        </authorList>
    </citation>
    <scope>NUCLEOTIDE SEQUENCE [GENOMIC DNA]</scope>
</reference>
<reference key="3">
    <citation type="journal article" date="2000" name="Genome">
        <title>Gene content and organization of a 281-kbp contig from the genome of the extremely thermophilic archaeon, Sulfolobus solfataricus P2.</title>
        <authorList>
            <person name="Charlebois R.L."/>
            <person name="Singh R.K."/>
            <person name="Chan-Weiher C.C.-Y."/>
            <person name="Allard G."/>
            <person name="Chow C."/>
            <person name="Confalonieri F."/>
            <person name="Curtis B."/>
            <person name="Duguet M."/>
            <person name="Erauso G."/>
            <person name="Faguy D."/>
            <person name="Gaasterland T."/>
            <person name="Garrett R.A."/>
            <person name="Gordon P."/>
            <person name="Jeffries A.C."/>
            <person name="Kozera C."/>
            <person name="Kushwaha N."/>
            <person name="Lafleur E."/>
            <person name="Medina N."/>
            <person name="Peng X."/>
            <person name="Penny S.L."/>
            <person name="She Q."/>
            <person name="St Jean A."/>
            <person name="van der Oost J."/>
            <person name="Young F."/>
            <person name="Zivanovic Y."/>
            <person name="Doolittle W.F."/>
            <person name="Ragan M.A."/>
            <person name="Sensen C.W."/>
        </authorList>
    </citation>
    <scope>NUCLEOTIDE SEQUENCE [LARGE SCALE GENOMIC DNA]</scope>
    <source>
        <strain>ATCC 35092 / DSM 1617 / JCM 11322 / P2</strain>
    </source>
</reference>
<reference key="4">
    <citation type="journal article" date="2001" name="Proc. Natl. Acad. Sci. U.S.A.">
        <title>The complete genome of the crenarchaeon Sulfolobus solfataricus P2.</title>
        <authorList>
            <person name="She Q."/>
            <person name="Singh R.K."/>
            <person name="Confalonieri F."/>
            <person name="Zivanovic Y."/>
            <person name="Allard G."/>
            <person name="Awayez M.J."/>
            <person name="Chan-Weiher C.C.-Y."/>
            <person name="Clausen I.G."/>
            <person name="Curtis B.A."/>
            <person name="De Moors A."/>
            <person name="Erauso G."/>
            <person name="Fletcher C."/>
            <person name="Gordon P.M.K."/>
            <person name="Heikamp-de Jong I."/>
            <person name="Jeffries A.C."/>
            <person name="Kozera C.J."/>
            <person name="Medina N."/>
            <person name="Peng X."/>
            <person name="Thi-Ngoc H.P."/>
            <person name="Redder P."/>
            <person name="Schenk M.E."/>
            <person name="Theriault C."/>
            <person name="Tolstrup N."/>
            <person name="Charlebois R.L."/>
            <person name="Doolittle W.F."/>
            <person name="Duguet M."/>
            <person name="Gaasterland T."/>
            <person name="Garrett R.A."/>
            <person name="Ragan M.A."/>
            <person name="Sensen C.W."/>
            <person name="Van der Oost J."/>
        </authorList>
    </citation>
    <scope>NUCLEOTIDE SEQUENCE [LARGE SCALE GENOMIC DNA]</scope>
    <source>
        <strain>ATCC 35092 / DSM 1617 / JCM 11322 / P2</strain>
    </source>
</reference>
<reference key="5">
    <citation type="journal article" date="1999" name="J. Mol. Biol.">
        <title>Crystal structure of the glyceraldehyde-3-phosphate dehydrogenase from the hyperthermophilic archaeon Sulfolobus solfataricus.</title>
        <authorList>
            <person name="Isupov M.N."/>
            <person name="Fleming T.M."/>
            <person name="Dalby A.R."/>
            <person name="Crowhurst G.S."/>
            <person name="Bourne P.C."/>
            <person name="Littlechild J.A."/>
        </authorList>
    </citation>
    <scope>X-RAY CRYSTALLOGRAPHY (2.05 ANGSTROMS)</scope>
</reference>
<feature type="chain" id="PRO_0000145735" description="Glyceraldehyde-3-phosphate dehydrogenase">
    <location>
        <begin position="1"/>
        <end position="340"/>
    </location>
</feature>
<feature type="active site" description="Nucleophile" evidence="1">
    <location>
        <position position="139"/>
    </location>
</feature>
<feature type="binding site" evidence="1">
    <location>
        <begin position="11"/>
        <end position="12"/>
    </location>
    <ligand>
        <name>NAD(+)</name>
        <dbReference type="ChEBI" id="CHEBI:57540"/>
    </ligand>
</feature>
<feature type="binding site" evidence="1">
    <location>
        <position position="109"/>
    </location>
    <ligand>
        <name>NAD(+)</name>
        <dbReference type="ChEBI" id="CHEBI:57540"/>
    </ligand>
</feature>
<feature type="binding site" evidence="1">
    <location>
        <begin position="138"/>
        <end position="140"/>
    </location>
    <ligand>
        <name>D-glyceraldehyde 3-phosphate</name>
        <dbReference type="ChEBI" id="CHEBI:59776"/>
    </ligand>
</feature>
<feature type="binding site" evidence="1">
    <location>
        <position position="167"/>
    </location>
    <ligand>
        <name>NAD(+)</name>
        <dbReference type="ChEBI" id="CHEBI:57540"/>
    </ligand>
</feature>
<feature type="binding site" evidence="1">
    <location>
        <begin position="193"/>
        <end position="194"/>
    </location>
    <ligand>
        <name>D-glyceraldehyde 3-phosphate</name>
        <dbReference type="ChEBI" id="CHEBI:59776"/>
    </ligand>
</feature>
<feature type="binding site" evidence="1">
    <location>
        <position position="300"/>
    </location>
    <ligand>
        <name>NAD(+)</name>
        <dbReference type="ChEBI" id="CHEBI:57540"/>
    </ligand>
</feature>
<feature type="disulfide bond">
    <location>
        <begin position="123"/>
        <end position="149"/>
    </location>
</feature>
<feature type="sequence conflict" description="In Ref. 1; CAA47040." evidence="2" ref="1">
    <original>I</original>
    <variation>Y</variation>
    <location>
        <position position="48"/>
    </location>
</feature>
<feature type="sequence conflict" description="In Ref. 1; CAA47040." evidence="2" ref="1">
    <original>V</original>
    <variation>AL</variation>
    <location>
        <position position="52"/>
    </location>
</feature>
<feature type="sequence conflict" description="In Ref. 1; CAA47040." evidence="2" ref="1">
    <original>ED</original>
    <variation>DY</variation>
    <location>
        <begin position="72"/>
        <end position="73"/>
    </location>
</feature>
<feature type="sequence conflict" description="In Ref. 1; CAA47040." evidence="2" ref="1">
    <original>K</original>
    <variation>N</variation>
    <location>
        <position position="159"/>
    </location>
</feature>
<feature type="strand" evidence="3">
    <location>
        <begin position="2"/>
        <end position="7"/>
    </location>
</feature>
<feature type="helix" evidence="3">
    <location>
        <begin position="11"/>
        <end position="21"/>
    </location>
</feature>
<feature type="strand" evidence="3">
    <location>
        <begin position="26"/>
        <end position="32"/>
    </location>
</feature>
<feature type="helix" evidence="3">
    <location>
        <begin position="38"/>
        <end position="45"/>
    </location>
</feature>
<feature type="helix" evidence="3">
    <location>
        <begin position="54"/>
        <end position="56"/>
    </location>
</feature>
<feature type="helix" evidence="3">
    <location>
        <begin position="57"/>
        <end position="61"/>
    </location>
</feature>
<feature type="turn" evidence="3">
    <location>
        <begin position="62"/>
        <end position="64"/>
    </location>
</feature>
<feature type="helix" evidence="3">
    <location>
        <begin position="71"/>
        <end position="77"/>
    </location>
</feature>
<feature type="strand" evidence="3">
    <location>
        <begin position="79"/>
        <end position="83"/>
    </location>
</feature>
<feature type="helix" evidence="3">
    <location>
        <begin position="89"/>
        <end position="99"/>
    </location>
</feature>
<feature type="strand" evidence="3">
    <location>
        <begin position="103"/>
        <end position="106"/>
    </location>
</feature>
<feature type="helix" evidence="3">
    <location>
        <begin position="112"/>
        <end position="114"/>
    </location>
</feature>
<feature type="helix" evidence="3">
    <location>
        <begin position="121"/>
        <end position="128"/>
    </location>
</feature>
<feature type="strand" evidence="3">
    <location>
        <begin position="132"/>
        <end position="136"/>
    </location>
</feature>
<feature type="helix" evidence="3">
    <location>
        <begin position="139"/>
        <end position="152"/>
    </location>
</feature>
<feature type="strand" evidence="3">
    <location>
        <begin position="157"/>
        <end position="169"/>
    </location>
</feature>
<feature type="strand" evidence="3">
    <location>
        <begin position="183"/>
        <end position="190"/>
    </location>
</feature>
<feature type="helix" evidence="3">
    <location>
        <begin position="193"/>
        <end position="198"/>
    </location>
</feature>
<feature type="strand" evidence="3">
    <location>
        <begin position="205"/>
        <end position="214"/>
    </location>
</feature>
<feature type="strand" evidence="3">
    <location>
        <begin position="219"/>
        <end position="229"/>
    </location>
</feature>
<feature type="helix" evidence="3">
    <location>
        <begin position="233"/>
        <end position="241"/>
    </location>
</feature>
<feature type="strand" evidence="3">
    <location>
        <begin position="246"/>
        <end position="249"/>
    </location>
</feature>
<feature type="strand" evidence="3">
    <location>
        <begin position="251"/>
        <end position="254"/>
    </location>
</feature>
<feature type="helix" evidence="3">
    <location>
        <begin position="258"/>
        <end position="267"/>
    </location>
</feature>
<feature type="helix" evidence="3">
    <location>
        <begin position="271"/>
        <end position="273"/>
    </location>
</feature>
<feature type="strand" evidence="3">
    <location>
        <begin position="277"/>
        <end position="281"/>
    </location>
</feature>
<feature type="helix" evidence="3">
    <location>
        <begin position="282"/>
        <end position="284"/>
    </location>
</feature>
<feature type="strand" evidence="3">
    <location>
        <begin position="286"/>
        <end position="288"/>
    </location>
</feature>
<feature type="strand" evidence="3">
    <location>
        <begin position="291"/>
        <end position="298"/>
    </location>
</feature>
<feature type="turn" evidence="3">
    <location>
        <begin position="300"/>
        <end position="303"/>
    </location>
</feature>
<feature type="helix" evidence="3">
    <location>
        <begin position="304"/>
        <end position="315"/>
    </location>
</feature>
<feature type="helix" evidence="3">
    <location>
        <begin position="321"/>
        <end position="331"/>
    </location>
</feature>
<feature type="strand" evidence="3">
    <location>
        <begin position="337"/>
        <end position="340"/>
    </location>
</feature>
<keyword id="KW-0002">3D-structure</keyword>
<keyword id="KW-0963">Cytoplasm</keyword>
<keyword id="KW-0903">Direct protein sequencing</keyword>
<keyword id="KW-1015">Disulfide bond</keyword>
<keyword id="KW-0324">Glycolysis</keyword>
<keyword id="KW-0520">NAD</keyword>
<keyword id="KW-0521">NADP</keyword>
<keyword id="KW-0560">Oxidoreductase</keyword>
<keyword id="KW-1185">Reference proteome</keyword>
<sequence length="340" mass="37596">MINVAVNGYGTIGKRVADAIIKQPDMKLVGVAKTSPNYEAFIAHRRGIRIYVPQQSIKKFEESGIPVAGTVEDLIKTSDIVVDTTPNGVGAQYKPIYLQLQRNAIFQGGEKAEVADISFSALCNYNEALGKKYIRVVSCNTTALLRTICTVNKVSKVEKVRATIVRRAADQKEVKKGPINSLVPDPATVPSHHAKDVNSVIRNLDIATMAVIAPTTLMHMHFINITLKDKVEKKDILSVLENTPRIVLISSKYDAEATAELVEVARDLKRDRNDIPEVMIFSDSIYVKDDEVMLMYAVHQESIVVPENIDAIRASMKLMSAEDSMRITNESLGILKGYLI</sequence>
<name>G3P_SACS2</name>
<protein>
    <recommendedName>
        <fullName>Glyceraldehyde-3-phosphate dehydrogenase</fullName>
        <shortName>GAPDH</shortName>
        <ecNumber>1.2.1.59</ecNumber>
    </recommendedName>
    <alternativeName>
        <fullName>NAD(P)-dependent glyceraldehyde-3-phosphate dehydrogenase</fullName>
    </alternativeName>
</protein>
<accession>P39460</accession>
<proteinExistence type="evidence at protein level"/>
<gene>
    <name type="primary">gap</name>
    <name type="synonym">agaPD</name>
    <name type="ordered locus">SSO0528</name>
    <name type="ORF">C22_023</name>
</gene>
<comment type="function">
    <text>Can use both NAD and NADP as cofactors, but exhibits a marked preference for NADP.</text>
</comment>
<comment type="catalytic activity">
    <reaction>
        <text>D-glyceraldehyde 3-phosphate + phosphate + NADP(+) = (2R)-3-phospho-glyceroyl phosphate + NADPH + H(+)</text>
        <dbReference type="Rhea" id="RHEA:10296"/>
        <dbReference type="ChEBI" id="CHEBI:15378"/>
        <dbReference type="ChEBI" id="CHEBI:43474"/>
        <dbReference type="ChEBI" id="CHEBI:57604"/>
        <dbReference type="ChEBI" id="CHEBI:57783"/>
        <dbReference type="ChEBI" id="CHEBI:58349"/>
        <dbReference type="ChEBI" id="CHEBI:59776"/>
        <dbReference type="EC" id="1.2.1.59"/>
    </reaction>
</comment>
<comment type="catalytic activity">
    <reaction>
        <text>D-glyceraldehyde 3-phosphate + phosphate + NAD(+) = (2R)-3-phospho-glyceroyl phosphate + NADH + H(+)</text>
        <dbReference type="Rhea" id="RHEA:10300"/>
        <dbReference type="ChEBI" id="CHEBI:15378"/>
        <dbReference type="ChEBI" id="CHEBI:43474"/>
        <dbReference type="ChEBI" id="CHEBI:57540"/>
        <dbReference type="ChEBI" id="CHEBI:57604"/>
        <dbReference type="ChEBI" id="CHEBI:57945"/>
        <dbReference type="ChEBI" id="CHEBI:59776"/>
        <dbReference type="EC" id="1.2.1.59"/>
    </reaction>
</comment>
<comment type="pathway">
    <text>Carbohydrate degradation; glycolysis; pyruvate from D-glyceraldehyde 3-phosphate: step 1/5.</text>
</comment>
<comment type="subunit">
    <text>Homotetramer.</text>
</comment>
<comment type="subcellular location">
    <subcellularLocation>
        <location>Cytoplasm</location>
    </subcellularLocation>
</comment>
<comment type="similarity">
    <text evidence="2">Belongs to the glyceraldehyde-3-phosphate dehydrogenase family.</text>
</comment>